<feature type="signal peptide" evidence="2">
    <location>
        <begin position="1"/>
        <end position="21"/>
    </location>
</feature>
<feature type="chain" id="PRO_0000301806" description="Nitrogen permease regulator 3">
    <location>
        <begin position="22"/>
        <end position="721"/>
    </location>
</feature>
<feature type="region of interest" description="Disordered" evidence="3">
    <location>
        <begin position="27"/>
        <end position="54"/>
    </location>
</feature>
<feature type="region of interest" description="Disordered" evidence="3">
    <location>
        <begin position="555"/>
        <end position="614"/>
    </location>
</feature>
<feature type="compositionally biased region" description="Acidic residues" evidence="3">
    <location>
        <begin position="37"/>
        <end position="54"/>
    </location>
</feature>
<name>NPR3_PICST</name>
<proteinExistence type="inferred from homology"/>
<gene>
    <name type="primary">NPR3</name>
    <name type="synonym">RMD11</name>
    <name type="ORF">PICST_63276</name>
</gene>
<reference key="1">
    <citation type="journal article" date="2007" name="Nat. Biotechnol.">
        <title>Genome sequence of the lignocellulose-bioconverting and xylose-fermenting yeast Pichia stipitis.</title>
        <authorList>
            <person name="Jeffries T.W."/>
            <person name="Grigoriev I.V."/>
            <person name="Grimwood J."/>
            <person name="Laplaza J.M."/>
            <person name="Aerts A."/>
            <person name="Salamov A."/>
            <person name="Schmutz J."/>
            <person name="Lindquist E."/>
            <person name="Dehal P."/>
            <person name="Shapiro H."/>
            <person name="Jin Y.-S."/>
            <person name="Passoth V."/>
            <person name="Richardson P.M."/>
        </authorList>
    </citation>
    <scope>NUCLEOTIDE SEQUENCE [LARGE SCALE GENOMIC DNA]</scope>
    <source>
        <strain>ATCC 58785 / CBS 6054 / NBRC 10063 / NRRL Y-11545</strain>
    </source>
</reference>
<protein>
    <recommendedName>
        <fullName>Nitrogen permease regulator 3</fullName>
    </recommendedName>
    <alternativeName>
        <fullName>Required for meiotic nuclear division protein 11</fullName>
    </alternativeName>
</protein>
<keyword id="KW-0469">Meiosis</keyword>
<keyword id="KW-1185">Reference proteome</keyword>
<keyword id="KW-0732">Signal</keyword>
<sequence>MSYNLPNPSLIGILLIISTHSGPQLIYKQPPGLTKEPDEDEGEYDQEDIAETESDEYGNYFEYDEDSNMYGTNLYKQWDANHLNYYMGTKKDLISFLDEIETKRKQASMKAVAKKRSQLSKIASNPSTISTTGNSGNDSIFGIEPAYLCEMLAPPKKMCNSRFEIMIDDKIFLGLPVHKYDNGSWRLKGSSKRINRNKEENTHQHEVDNSKSKLNLNMFHLVFIMNPPVIEYNYRIDEMFHYVISRLSLVLRYEQSKNDFISNQVKMILNLKEQFKEKEELESQLLNKSSLCKMIHDCYLSISQSKIANLSVNNKLRSFQIPIKTEFHSLPESSVPFIPGSHLSSTVGLLGTTGLINVGETTRYGEAMNDENEGISEAADDIVYFALLLLDDAESIIRDIKTESSGTLAKFIRMINPTESLLKLSTRSNSLDTLQVKSFAFHLIYWRRARVIQPLSTRSVYFVSPMAPITTNLYTDIREFKKSFPTLPSLPQFLKLLSPQSKKPSQFATVIPSKDHRDIYFEALSWLIRFGYVTQLQTFIWLKISRKIKIKVEEDLENESSSRKRSNITKKLLMGGTDNSSKDPAAESSTDNRIMDQNDDKEENATKQLSNINAEDQEIENIKERLKSTSLGPLVSLEDDDDTILLDPGRATTLERRWINKIIFDECKLSSELTNAFYKLLKYMDGKSPLELLLLKENISRTEIRKLLIAIEDHIISVRHW</sequence>
<comment type="function">
    <text evidence="1">Mediates inactivation of the TORC1 complex in response to amino acid starvation. Required for meiotic nuclear division (By similarity).</text>
</comment>
<comment type="similarity">
    <text evidence="4">Belongs to the NPR3 family.</text>
</comment>
<dbReference type="EMBL" id="CP000501">
    <property type="protein sequence ID" value="ABN68047.2"/>
    <property type="molecule type" value="Genomic_DNA"/>
</dbReference>
<dbReference type="RefSeq" id="XP_001386076.2">
    <property type="nucleotide sequence ID" value="XM_001386039.1"/>
</dbReference>
<dbReference type="SMR" id="A3LYV8"/>
<dbReference type="FunCoup" id="A3LYV8">
    <property type="interactions" value="111"/>
</dbReference>
<dbReference type="STRING" id="322104.A3LYV8"/>
<dbReference type="GeneID" id="4840642"/>
<dbReference type="KEGG" id="pic:PICST_63276"/>
<dbReference type="eggNOG" id="ENOG502QW35">
    <property type="taxonomic scope" value="Eukaryota"/>
</dbReference>
<dbReference type="HOGENOM" id="CLU_014314_0_0_1"/>
<dbReference type="InParanoid" id="A3LYV8"/>
<dbReference type="OMA" id="CNLAFRY"/>
<dbReference type="OrthoDB" id="18648at2759"/>
<dbReference type="Proteomes" id="UP000002258">
    <property type="component" value="Chromosome 7"/>
</dbReference>
<dbReference type="GO" id="GO:1990130">
    <property type="term" value="C:GATOR1 complex"/>
    <property type="evidence" value="ECO:0007669"/>
    <property type="project" value="TreeGrafter"/>
</dbReference>
<dbReference type="GO" id="GO:0034198">
    <property type="term" value="P:cellular response to amino acid starvation"/>
    <property type="evidence" value="ECO:0007669"/>
    <property type="project" value="TreeGrafter"/>
</dbReference>
<dbReference type="GO" id="GO:0051321">
    <property type="term" value="P:meiotic cell cycle"/>
    <property type="evidence" value="ECO:0007669"/>
    <property type="project" value="UniProtKB-KW"/>
</dbReference>
<dbReference type="GO" id="GO:1904262">
    <property type="term" value="P:negative regulation of TORC1 signaling"/>
    <property type="evidence" value="ECO:0007669"/>
    <property type="project" value="TreeGrafter"/>
</dbReference>
<dbReference type="GO" id="GO:0010508">
    <property type="term" value="P:positive regulation of autophagy"/>
    <property type="evidence" value="ECO:0007669"/>
    <property type="project" value="TreeGrafter"/>
</dbReference>
<dbReference type="GO" id="GO:0038202">
    <property type="term" value="P:TORC1 signaling"/>
    <property type="evidence" value="ECO:0007669"/>
    <property type="project" value="TreeGrafter"/>
</dbReference>
<dbReference type="InterPro" id="IPR056603">
    <property type="entry name" value="HTH_NPRL3"/>
</dbReference>
<dbReference type="InterPro" id="IPR005365">
    <property type="entry name" value="Npr3"/>
</dbReference>
<dbReference type="PANTHER" id="PTHR13153">
    <property type="entry name" value="CGTHBA PROTEIN -14 GENE PROTEIN"/>
    <property type="match status" value="1"/>
</dbReference>
<dbReference type="PANTHER" id="PTHR13153:SF5">
    <property type="entry name" value="GATOR COMPLEX PROTEIN NPRL3"/>
    <property type="match status" value="1"/>
</dbReference>
<dbReference type="Pfam" id="PF24064">
    <property type="entry name" value="HTH_NPRL3"/>
    <property type="match status" value="1"/>
</dbReference>
<dbReference type="Pfam" id="PF03666">
    <property type="entry name" value="NPR3"/>
    <property type="match status" value="1"/>
</dbReference>
<accession>A3LYV8</accession>
<evidence type="ECO:0000250" key="1"/>
<evidence type="ECO:0000255" key="2"/>
<evidence type="ECO:0000256" key="3">
    <source>
        <dbReference type="SAM" id="MobiDB-lite"/>
    </source>
</evidence>
<evidence type="ECO:0000305" key="4"/>
<organism>
    <name type="scientific">Scheffersomyces stipitis (strain ATCC 58785 / CBS 6054 / NBRC 10063 / NRRL Y-11545)</name>
    <name type="common">Yeast</name>
    <name type="synonym">Pichia stipitis</name>
    <dbReference type="NCBI Taxonomy" id="322104"/>
    <lineage>
        <taxon>Eukaryota</taxon>
        <taxon>Fungi</taxon>
        <taxon>Dikarya</taxon>
        <taxon>Ascomycota</taxon>
        <taxon>Saccharomycotina</taxon>
        <taxon>Pichiomycetes</taxon>
        <taxon>Debaryomycetaceae</taxon>
        <taxon>Scheffersomyces</taxon>
    </lineage>
</organism>